<reference key="1">
    <citation type="journal article" date="2006" name="J. Bacteriol.">
        <title>Complete genome sequence of the dehalorespiring bacterium Desulfitobacterium hafniense Y51 and comparison with Dehalococcoides ethenogenes 195.</title>
        <authorList>
            <person name="Nonaka H."/>
            <person name="Keresztes G."/>
            <person name="Shinoda Y."/>
            <person name="Ikenaga Y."/>
            <person name="Abe M."/>
            <person name="Naito K."/>
            <person name="Inatomi K."/>
            <person name="Furukawa K."/>
            <person name="Inui M."/>
            <person name="Yukawa H."/>
        </authorList>
    </citation>
    <scope>NUCLEOTIDE SEQUENCE [LARGE SCALE GENOMIC DNA]</scope>
    <source>
        <strain>Y51</strain>
    </source>
</reference>
<feature type="chain" id="PRO_1000025248" description="Co-chaperonin GroES">
    <location>
        <begin position="1"/>
        <end position="94"/>
    </location>
</feature>
<sequence>MNIKPLGDRVVIKALPMEEKTKSGIIMPDTAKEKPQEGEVVAVGPGKMEKGERIVLDVKVGDRVIYSKYAGTEVKYDGQEYLILKETDILAVIG</sequence>
<keyword id="KW-0143">Chaperone</keyword>
<keyword id="KW-0963">Cytoplasm</keyword>
<keyword id="KW-1185">Reference proteome</keyword>
<dbReference type="EMBL" id="AP008230">
    <property type="protein sequence ID" value="BAE85750.1"/>
    <property type="molecule type" value="Genomic_DNA"/>
</dbReference>
<dbReference type="RefSeq" id="WP_005817319.1">
    <property type="nucleotide sequence ID" value="NC_007907.1"/>
</dbReference>
<dbReference type="SMR" id="Q24QE2"/>
<dbReference type="STRING" id="138119.DSY3961"/>
<dbReference type="KEGG" id="dsy:DSY3961"/>
<dbReference type="eggNOG" id="COG0234">
    <property type="taxonomic scope" value="Bacteria"/>
</dbReference>
<dbReference type="HOGENOM" id="CLU_132825_2_0_9"/>
<dbReference type="Proteomes" id="UP000001946">
    <property type="component" value="Chromosome"/>
</dbReference>
<dbReference type="GO" id="GO:0005737">
    <property type="term" value="C:cytoplasm"/>
    <property type="evidence" value="ECO:0007669"/>
    <property type="project" value="UniProtKB-SubCell"/>
</dbReference>
<dbReference type="GO" id="GO:0005524">
    <property type="term" value="F:ATP binding"/>
    <property type="evidence" value="ECO:0007669"/>
    <property type="project" value="InterPro"/>
</dbReference>
<dbReference type="GO" id="GO:0046872">
    <property type="term" value="F:metal ion binding"/>
    <property type="evidence" value="ECO:0007669"/>
    <property type="project" value="TreeGrafter"/>
</dbReference>
<dbReference type="GO" id="GO:0044183">
    <property type="term" value="F:protein folding chaperone"/>
    <property type="evidence" value="ECO:0007669"/>
    <property type="project" value="InterPro"/>
</dbReference>
<dbReference type="GO" id="GO:0051087">
    <property type="term" value="F:protein-folding chaperone binding"/>
    <property type="evidence" value="ECO:0007669"/>
    <property type="project" value="TreeGrafter"/>
</dbReference>
<dbReference type="GO" id="GO:0051082">
    <property type="term" value="F:unfolded protein binding"/>
    <property type="evidence" value="ECO:0007669"/>
    <property type="project" value="TreeGrafter"/>
</dbReference>
<dbReference type="GO" id="GO:0051085">
    <property type="term" value="P:chaperone cofactor-dependent protein refolding"/>
    <property type="evidence" value="ECO:0007669"/>
    <property type="project" value="TreeGrafter"/>
</dbReference>
<dbReference type="CDD" id="cd00320">
    <property type="entry name" value="cpn10"/>
    <property type="match status" value="1"/>
</dbReference>
<dbReference type="FunFam" id="2.30.33.40:FF:000001">
    <property type="entry name" value="10 kDa chaperonin"/>
    <property type="match status" value="1"/>
</dbReference>
<dbReference type="Gene3D" id="2.30.33.40">
    <property type="entry name" value="GroES chaperonin"/>
    <property type="match status" value="1"/>
</dbReference>
<dbReference type="HAMAP" id="MF_00580">
    <property type="entry name" value="CH10"/>
    <property type="match status" value="1"/>
</dbReference>
<dbReference type="InterPro" id="IPR020818">
    <property type="entry name" value="Chaperonin_GroES"/>
</dbReference>
<dbReference type="InterPro" id="IPR037124">
    <property type="entry name" value="Chaperonin_GroES_sf"/>
</dbReference>
<dbReference type="InterPro" id="IPR018369">
    <property type="entry name" value="Chaprnonin_Cpn10_CS"/>
</dbReference>
<dbReference type="InterPro" id="IPR011032">
    <property type="entry name" value="GroES-like_sf"/>
</dbReference>
<dbReference type="NCBIfam" id="NF001527">
    <property type="entry name" value="PRK00364.1-2"/>
    <property type="match status" value="1"/>
</dbReference>
<dbReference type="NCBIfam" id="NF001530">
    <property type="entry name" value="PRK00364.1-6"/>
    <property type="match status" value="1"/>
</dbReference>
<dbReference type="NCBIfam" id="NF001531">
    <property type="entry name" value="PRK00364.2-2"/>
    <property type="match status" value="1"/>
</dbReference>
<dbReference type="NCBIfam" id="NF001533">
    <property type="entry name" value="PRK00364.2-4"/>
    <property type="match status" value="1"/>
</dbReference>
<dbReference type="NCBIfam" id="NF001534">
    <property type="entry name" value="PRK00364.2-5"/>
    <property type="match status" value="1"/>
</dbReference>
<dbReference type="PANTHER" id="PTHR10772">
    <property type="entry name" value="10 KDA HEAT SHOCK PROTEIN"/>
    <property type="match status" value="1"/>
</dbReference>
<dbReference type="PANTHER" id="PTHR10772:SF58">
    <property type="entry name" value="CO-CHAPERONIN GROES"/>
    <property type="match status" value="1"/>
</dbReference>
<dbReference type="Pfam" id="PF00166">
    <property type="entry name" value="Cpn10"/>
    <property type="match status" value="1"/>
</dbReference>
<dbReference type="PRINTS" id="PR00297">
    <property type="entry name" value="CHAPERONIN10"/>
</dbReference>
<dbReference type="SMART" id="SM00883">
    <property type="entry name" value="Cpn10"/>
    <property type="match status" value="1"/>
</dbReference>
<dbReference type="SUPFAM" id="SSF50129">
    <property type="entry name" value="GroES-like"/>
    <property type="match status" value="1"/>
</dbReference>
<dbReference type="PROSITE" id="PS00681">
    <property type="entry name" value="CHAPERONINS_CPN10"/>
    <property type="match status" value="1"/>
</dbReference>
<organism>
    <name type="scientific">Desulfitobacterium hafniense (strain Y51)</name>
    <dbReference type="NCBI Taxonomy" id="138119"/>
    <lineage>
        <taxon>Bacteria</taxon>
        <taxon>Bacillati</taxon>
        <taxon>Bacillota</taxon>
        <taxon>Clostridia</taxon>
        <taxon>Eubacteriales</taxon>
        <taxon>Desulfitobacteriaceae</taxon>
        <taxon>Desulfitobacterium</taxon>
    </lineage>
</organism>
<protein>
    <recommendedName>
        <fullName evidence="1">Co-chaperonin GroES</fullName>
    </recommendedName>
    <alternativeName>
        <fullName evidence="1">10 kDa chaperonin</fullName>
    </alternativeName>
    <alternativeName>
        <fullName evidence="1">Chaperonin-10</fullName>
        <shortName evidence="1">Cpn10</shortName>
    </alternativeName>
</protein>
<gene>
    <name evidence="1" type="primary">groES</name>
    <name evidence="1" type="synonym">groS</name>
    <name type="ordered locus">DSY3961</name>
</gene>
<accession>Q24QE2</accession>
<evidence type="ECO:0000255" key="1">
    <source>
        <dbReference type="HAMAP-Rule" id="MF_00580"/>
    </source>
</evidence>
<name>CH10_DESHY</name>
<comment type="function">
    <text evidence="1">Together with the chaperonin GroEL, plays an essential role in assisting protein folding. The GroEL-GroES system forms a nano-cage that allows encapsulation of the non-native substrate proteins and provides a physical environment optimized to promote and accelerate protein folding. GroES binds to the apical surface of the GroEL ring, thereby capping the opening of the GroEL channel.</text>
</comment>
<comment type="subunit">
    <text evidence="1">Heptamer of 7 subunits arranged in a ring. Interacts with the chaperonin GroEL.</text>
</comment>
<comment type="subcellular location">
    <subcellularLocation>
        <location evidence="1">Cytoplasm</location>
    </subcellularLocation>
</comment>
<comment type="similarity">
    <text evidence="1">Belongs to the GroES chaperonin family.</text>
</comment>
<proteinExistence type="inferred from homology"/>